<organism>
    <name type="scientific">Astacus astacus</name>
    <name type="common">Noble crayfish</name>
    <name type="synonym">Astacus fluviatilis</name>
    <dbReference type="NCBI Taxonomy" id="6715"/>
    <lineage>
        <taxon>Eukaryota</taxon>
        <taxon>Metazoa</taxon>
        <taxon>Ecdysozoa</taxon>
        <taxon>Arthropoda</taxon>
        <taxon>Crustacea</taxon>
        <taxon>Multicrustacea</taxon>
        <taxon>Malacostraca</taxon>
        <taxon>Eumalacostraca</taxon>
        <taxon>Eucarida</taxon>
        <taxon>Decapoda</taxon>
        <taxon>Pleocyemata</taxon>
        <taxon>Astacidea</taxon>
        <taxon>Astacoidea</taxon>
        <taxon>Astacidae</taxon>
        <taxon>Astacus</taxon>
    </lineage>
</organism>
<name>TRYP_ASTAS</name>
<evidence type="ECO:0000250" key="1"/>
<evidence type="ECO:0000255" key="2">
    <source>
        <dbReference type="PROSITE-ProRule" id="PRU00274"/>
    </source>
</evidence>
<dbReference type="EC" id="3.4.21.4"/>
<dbReference type="PIR" id="A00951">
    <property type="entry name" value="TRCY1"/>
</dbReference>
<dbReference type="SMR" id="P00765"/>
<dbReference type="MEROPS" id="S01.035"/>
<dbReference type="GO" id="GO:0005576">
    <property type="term" value="C:extracellular region"/>
    <property type="evidence" value="ECO:0007669"/>
    <property type="project" value="UniProtKB-SubCell"/>
</dbReference>
<dbReference type="GO" id="GO:0046872">
    <property type="term" value="F:metal ion binding"/>
    <property type="evidence" value="ECO:0007669"/>
    <property type="project" value="UniProtKB-KW"/>
</dbReference>
<dbReference type="GO" id="GO:0004252">
    <property type="term" value="F:serine-type endopeptidase activity"/>
    <property type="evidence" value="ECO:0007669"/>
    <property type="project" value="UniProtKB-EC"/>
</dbReference>
<dbReference type="GO" id="GO:0007586">
    <property type="term" value="P:digestion"/>
    <property type="evidence" value="ECO:0007669"/>
    <property type="project" value="UniProtKB-KW"/>
</dbReference>
<dbReference type="GO" id="GO:0006508">
    <property type="term" value="P:proteolysis"/>
    <property type="evidence" value="ECO:0007669"/>
    <property type="project" value="UniProtKB-KW"/>
</dbReference>
<dbReference type="CDD" id="cd00190">
    <property type="entry name" value="Tryp_SPc"/>
    <property type="match status" value="1"/>
</dbReference>
<dbReference type="FunFam" id="2.40.10.10:FF:000038">
    <property type="entry name" value="Serine protease"/>
    <property type="match status" value="1"/>
</dbReference>
<dbReference type="Gene3D" id="2.40.10.10">
    <property type="entry name" value="Trypsin-like serine proteases"/>
    <property type="match status" value="2"/>
</dbReference>
<dbReference type="InterPro" id="IPR009003">
    <property type="entry name" value="Peptidase_S1_PA"/>
</dbReference>
<dbReference type="InterPro" id="IPR043504">
    <property type="entry name" value="Peptidase_S1_PA_chymotrypsin"/>
</dbReference>
<dbReference type="InterPro" id="IPR001314">
    <property type="entry name" value="Peptidase_S1A"/>
</dbReference>
<dbReference type="InterPro" id="IPR001254">
    <property type="entry name" value="Trypsin_dom"/>
</dbReference>
<dbReference type="InterPro" id="IPR018114">
    <property type="entry name" value="TRYPSIN_HIS"/>
</dbReference>
<dbReference type="InterPro" id="IPR033116">
    <property type="entry name" value="TRYPSIN_SER"/>
</dbReference>
<dbReference type="PANTHER" id="PTHR24252">
    <property type="entry name" value="ACROSIN-RELATED"/>
    <property type="match status" value="1"/>
</dbReference>
<dbReference type="PANTHER" id="PTHR24252:SF7">
    <property type="entry name" value="HYALIN"/>
    <property type="match status" value="1"/>
</dbReference>
<dbReference type="Pfam" id="PF00089">
    <property type="entry name" value="Trypsin"/>
    <property type="match status" value="1"/>
</dbReference>
<dbReference type="PRINTS" id="PR00722">
    <property type="entry name" value="CHYMOTRYPSIN"/>
</dbReference>
<dbReference type="SMART" id="SM00020">
    <property type="entry name" value="Tryp_SPc"/>
    <property type="match status" value="1"/>
</dbReference>
<dbReference type="SUPFAM" id="SSF50494">
    <property type="entry name" value="Trypsin-like serine proteases"/>
    <property type="match status" value="1"/>
</dbReference>
<dbReference type="PROSITE" id="PS50240">
    <property type="entry name" value="TRYPSIN_DOM"/>
    <property type="match status" value="1"/>
</dbReference>
<dbReference type="PROSITE" id="PS00134">
    <property type="entry name" value="TRYPSIN_HIS"/>
    <property type="match status" value="1"/>
</dbReference>
<dbReference type="PROSITE" id="PS00135">
    <property type="entry name" value="TRYPSIN_SER"/>
    <property type="match status" value="1"/>
</dbReference>
<accession>P00765</accession>
<proteinExistence type="evidence at protein level"/>
<sequence length="237" mass="25022">IVGGTDAVLGEFPYQLSFQETFLGFSFHFCGASIYNENYAITAGHCVYGDDYENPSGLQIVAGELDMSVNEGSEQTITVSKIILHENFDYDLLDNDISLLKLSGSLTFNNNVAPIALPAQGHTATGNVIVTGWGTTSEGGNTPDVLQKVTVPLVSDAECRDDYGADEIFDSMICAGVPEGGKDSCQGDSGGPLAASDTGSTYLAGIVSWGYGCARPGYPGVYTEVSYHVDWIKANAV</sequence>
<comment type="catalytic activity">
    <reaction>
        <text>Preferential cleavage: Arg-|-Xaa, Lys-|-Xaa.</text>
        <dbReference type="EC" id="3.4.21.4"/>
    </reaction>
</comment>
<comment type="cofactor">
    <cofactor evidence="1">
        <name>Ca(2+)</name>
        <dbReference type="ChEBI" id="CHEBI:29108"/>
    </cofactor>
    <text evidence="1">Binds 1 Ca(2+) ion per subunit.</text>
</comment>
<comment type="subcellular location">
    <subcellularLocation>
        <location>Secreted</location>
        <location>Extracellular space</location>
    </subcellularLocation>
</comment>
<comment type="miscellaneous">
    <text>Trypsin I is one of five forms of the enzyme known to be present in crayfish. This protein is more acidic than mammalian trypsin.</text>
</comment>
<comment type="similarity">
    <text evidence="2">Belongs to the peptidase S1 family.</text>
</comment>
<reference key="1">
    <citation type="journal article" date="1983" name="Biochemistry">
        <title>Amino acid sequence of crayfish (Astacus fluviatilis) trypsin If.</title>
        <authorList>
            <person name="Titani K."/>
            <person name="Sasagawa T."/>
            <person name="Woodbury R.G."/>
            <person name="Ericsson L.H."/>
            <person name="Dorsam H."/>
            <person name="Kraemer M."/>
            <person name="Neurath H."/>
            <person name="Zwilling R."/>
        </authorList>
    </citation>
    <scope>PROTEIN SEQUENCE</scope>
</reference>
<protein>
    <recommendedName>
        <fullName>Trypsin-1</fullName>
        <ecNumber>3.4.21.4</ecNumber>
    </recommendedName>
    <alternativeName>
        <fullName>Trypsin I</fullName>
    </alternativeName>
</protein>
<feature type="chain" id="PRO_0000088715" description="Trypsin-1">
    <location>
        <begin position="1"/>
        <end position="237"/>
    </location>
</feature>
<feature type="domain" description="Peptidase S1" evidence="2">
    <location>
        <begin position="1"/>
        <end position="237"/>
    </location>
</feature>
<feature type="active site" description="Charge relay system" evidence="1">
    <location>
        <position position="45"/>
    </location>
</feature>
<feature type="active site" description="Charge relay system" evidence="1">
    <location>
        <position position="96"/>
    </location>
</feature>
<feature type="active site" description="Charge relay system" evidence="1">
    <location>
        <position position="189"/>
    </location>
</feature>
<feature type="binding site" evidence="1">
    <location>
        <position position="64"/>
    </location>
    <ligand>
        <name>Ca(2+)</name>
        <dbReference type="ChEBI" id="CHEBI:29108"/>
    </ligand>
</feature>
<feature type="binding site" evidence="1">
    <location>
        <position position="69"/>
    </location>
    <ligand>
        <name>Ca(2+)</name>
        <dbReference type="ChEBI" id="CHEBI:29108"/>
    </ligand>
</feature>
<feature type="binding site" evidence="1">
    <location>
        <position position="74"/>
    </location>
    <ligand>
        <name>Ca(2+)</name>
        <dbReference type="ChEBI" id="CHEBI:29108"/>
    </ligand>
</feature>
<feature type="site" description="Required for specificity" evidence="1">
    <location>
        <position position="183"/>
    </location>
</feature>
<feature type="disulfide bond">
    <location>
        <begin position="30"/>
        <end position="46"/>
    </location>
</feature>
<feature type="disulfide bond">
    <location>
        <begin position="159"/>
        <end position="174"/>
    </location>
</feature>
<feature type="disulfide bond">
    <location>
        <begin position="185"/>
        <end position="213"/>
    </location>
</feature>
<keyword id="KW-0106">Calcium</keyword>
<keyword id="KW-0222">Digestion</keyword>
<keyword id="KW-0903">Direct protein sequencing</keyword>
<keyword id="KW-1015">Disulfide bond</keyword>
<keyword id="KW-0378">Hydrolase</keyword>
<keyword id="KW-0479">Metal-binding</keyword>
<keyword id="KW-0645">Protease</keyword>
<keyword id="KW-0964">Secreted</keyword>
<keyword id="KW-0720">Serine protease</keyword>